<evidence type="ECO:0000256" key="1">
    <source>
        <dbReference type="SAM" id="MobiDB-lite"/>
    </source>
</evidence>
<feature type="chain" id="PRO_0000346978" description="Putative uncharacterized protein DDB_G0288657">
    <location>
        <begin position="1"/>
        <end position="82"/>
    </location>
</feature>
<feature type="region of interest" description="Disordered" evidence="1">
    <location>
        <begin position="29"/>
        <end position="64"/>
    </location>
</feature>
<feature type="compositionally biased region" description="Low complexity" evidence="1">
    <location>
        <begin position="29"/>
        <end position="38"/>
    </location>
</feature>
<feature type="compositionally biased region" description="Polar residues" evidence="1">
    <location>
        <begin position="39"/>
        <end position="50"/>
    </location>
</feature>
<feature type="compositionally biased region" description="Low complexity" evidence="1">
    <location>
        <begin position="51"/>
        <end position="64"/>
    </location>
</feature>
<protein>
    <recommendedName>
        <fullName>Putative uncharacterized protein DDB_G0288657</fullName>
    </recommendedName>
</protein>
<proteinExistence type="predicted"/>
<accession>Q54IM4</accession>
<keyword id="KW-1185">Reference proteome</keyword>
<gene>
    <name type="ORF">DDB_G0288657</name>
</gene>
<sequence>MMQRVAKLSVQTASRVSFKTCTNNFSAATATKSTSSGSVPSFFTESTSTPLNQSKTNTSTLNKSSKLNNNLIDNIMYVYFIY</sequence>
<organism>
    <name type="scientific">Dictyostelium discoideum</name>
    <name type="common">Social amoeba</name>
    <dbReference type="NCBI Taxonomy" id="44689"/>
    <lineage>
        <taxon>Eukaryota</taxon>
        <taxon>Amoebozoa</taxon>
        <taxon>Evosea</taxon>
        <taxon>Eumycetozoa</taxon>
        <taxon>Dictyostelia</taxon>
        <taxon>Dictyosteliales</taxon>
        <taxon>Dictyosteliaceae</taxon>
        <taxon>Dictyostelium</taxon>
    </lineage>
</organism>
<reference key="1">
    <citation type="journal article" date="2005" name="Nature">
        <title>The genome of the social amoeba Dictyostelium discoideum.</title>
        <authorList>
            <person name="Eichinger L."/>
            <person name="Pachebat J.A."/>
            <person name="Gloeckner G."/>
            <person name="Rajandream M.A."/>
            <person name="Sucgang R."/>
            <person name="Berriman M."/>
            <person name="Song J."/>
            <person name="Olsen R."/>
            <person name="Szafranski K."/>
            <person name="Xu Q."/>
            <person name="Tunggal B."/>
            <person name="Kummerfeld S."/>
            <person name="Madera M."/>
            <person name="Konfortov B.A."/>
            <person name="Rivero F."/>
            <person name="Bankier A.T."/>
            <person name="Lehmann R."/>
            <person name="Hamlin N."/>
            <person name="Davies R."/>
            <person name="Gaudet P."/>
            <person name="Fey P."/>
            <person name="Pilcher K."/>
            <person name="Chen G."/>
            <person name="Saunders D."/>
            <person name="Sodergren E.J."/>
            <person name="Davis P."/>
            <person name="Kerhornou A."/>
            <person name="Nie X."/>
            <person name="Hall N."/>
            <person name="Anjard C."/>
            <person name="Hemphill L."/>
            <person name="Bason N."/>
            <person name="Farbrother P."/>
            <person name="Desany B."/>
            <person name="Just E."/>
            <person name="Morio T."/>
            <person name="Rost R."/>
            <person name="Churcher C.M."/>
            <person name="Cooper J."/>
            <person name="Haydock S."/>
            <person name="van Driessche N."/>
            <person name="Cronin A."/>
            <person name="Goodhead I."/>
            <person name="Muzny D.M."/>
            <person name="Mourier T."/>
            <person name="Pain A."/>
            <person name="Lu M."/>
            <person name="Harper D."/>
            <person name="Lindsay R."/>
            <person name="Hauser H."/>
            <person name="James K.D."/>
            <person name="Quiles M."/>
            <person name="Madan Babu M."/>
            <person name="Saito T."/>
            <person name="Buchrieser C."/>
            <person name="Wardroper A."/>
            <person name="Felder M."/>
            <person name="Thangavelu M."/>
            <person name="Johnson D."/>
            <person name="Knights A."/>
            <person name="Loulseged H."/>
            <person name="Mungall K.L."/>
            <person name="Oliver K."/>
            <person name="Price C."/>
            <person name="Quail M.A."/>
            <person name="Urushihara H."/>
            <person name="Hernandez J."/>
            <person name="Rabbinowitsch E."/>
            <person name="Steffen D."/>
            <person name="Sanders M."/>
            <person name="Ma J."/>
            <person name="Kohara Y."/>
            <person name="Sharp S."/>
            <person name="Simmonds M.N."/>
            <person name="Spiegler S."/>
            <person name="Tivey A."/>
            <person name="Sugano S."/>
            <person name="White B."/>
            <person name="Walker D."/>
            <person name="Woodward J.R."/>
            <person name="Winckler T."/>
            <person name="Tanaka Y."/>
            <person name="Shaulsky G."/>
            <person name="Schleicher M."/>
            <person name="Weinstock G.M."/>
            <person name="Rosenthal A."/>
            <person name="Cox E.C."/>
            <person name="Chisholm R.L."/>
            <person name="Gibbs R.A."/>
            <person name="Loomis W.F."/>
            <person name="Platzer M."/>
            <person name="Kay R.R."/>
            <person name="Williams J.G."/>
            <person name="Dear P.H."/>
            <person name="Noegel A.A."/>
            <person name="Barrell B.G."/>
            <person name="Kuspa A."/>
        </authorList>
    </citation>
    <scope>NUCLEOTIDE SEQUENCE [LARGE SCALE GENOMIC DNA]</scope>
    <source>
        <strain>AX4</strain>
    </source>
</reference>
<dbReference type="EMBL" id="AAFI02000119">
    <property type="protein sequence ID" value="EAL63105.1"/>
    <property type="molecule type" value="Genomic_DNA"/>
</dbReference>
<dbReference type="RefSeq" id="XP_636607.1">
    <property type="nucleotide sequence ID" value="XM_631515.1"/>
</dbReference>
<dbReference type="PaxDb" id="44689-DDB0188038"/>
<dbReference type="EnsemblProtists" id="EAL63105">
    <property type="protein sequence ID" value="EAL63105"/>
    <property type="gene ID" value="DDB_G0288657"/>
</dbReference>
<dbReference type="GeneID" id="8626735"/>
<dbReference type="KEGG" id="ddi:DDB_G0288657"/>
<dbReference type="dictyBase" id="DDB_G0288657"/>
<dbReference type="VEuPathDB" id="AmoebaDB:DDB_G0288657"/>
<dbReference type="HOGENOM" id="CLU_2563218_0_0_1"/>
<dbReference type="InParanoid" id="Q54IM4"/>
<dbReference type="PRO" id="PR:Q54IM4"/>
<dbReference type="Proteomes" id="UP000002195">
    <property type="component" value="Chromosome 5"/>
</dbReference>
<name>Y8038_DICDI</name>